<proteinExistence type="inferred from homology"/>
<reference key="1">
    <citation type="journal article" date="2006" name="Science">
        <title>Large-scale sequence analysis of avian influenza isolates.</title>
        <authorList>
            <person name="Obenauer J.C."/>
            <person name="Denson J."/>
            <person name="Mehta P.K."/>
            <person name="Su X."/>
            <person name="Mukatira S."/>
            <person name="Finkelstein D.B."/>
            <person name="Xu X."/>
            <person name="Wang J."/>
            <person name="Ma J."/>
            <person name="Fan Y."/>
            <person name="Rakestraw K.M."/>
            <person name="Webster R.G."/>
            <person name="Hoffmann E."/>
            <person name="Krauss S."/>
            <person name="Zheng J."/>
            <person name="Zhang Z."/>
            <person name="Naeve C.W."/>
        </authorList>
    </citation>
    <scope>NUCLEOTIDE SEQUENCE [GENOMIC RNA]</scope>
</reference>
<feature type="chain" id="PRO_0000278724" description="Protein PB1-F2">
    <location>
        <begin position="1"/>
        <end position="90"/>
    </location>
</feature>
<feature type="region of interest" description="Disordered" evidence="2">
    <location>
        <begin position="1"/>
        <end position="29"/>
    </location>
</feature>
<feature type="region of interest" description="Mitochondrial targeting sequence" evidence="1">
    <location>
        <begin position="65"/>
        <end position="87"/>
    </location>
</feature>
<feature type="compositionally biased region" description="Polar residues" evidence="2">
    <location>
        <begin position="7"/>
        <end position="28"/>
    </location>
</feature>
<feature type="site" description="High pathogenicity" evidence="1">
    <location>
        <position position="66"/>
    </location>
</feature>
<dbReference type="EMBL" id="CY005912">
    <property type="protein sequence ID" value="ABB21828.1"/>
    <property type="molecule type" value="Genomic_RNA"/>
</dbReference>
<dbReference type="SMR" id="Q20NN4"/>
<dbReference type="Proteomes" id="UP000008579">
    <property type="component" value="Genome"/>
</dbReference>
<dbReference type="GO" id="GO:0044164">
    <property type="term" value="C:host cell cytosol"/>
    <property type="evidence" value="ECO:0007669"/>
    <property type="project" value="UniProtKB-SubCell"/>
</dbReference>
<dbReference type="GO" id="GO:0044192">
    <property type="term" value="C:host cell mitochondrial inner membrane"/>
    <property type="evidence" value="ECO:0007669"/>
    <property type="project" value="UniProtKB-SubCell"/>
</dbReference>
<dbReference type="GO" id="GO:0042025">
    <property type="term" value="C:host cell nucleus"/>
    <property type="evidence" value="ECO:0007669"/>
    <property type="project" value="UniProtKB-SubCell"/>
</dbReference>
<dbReference type="GO" id="GO:0016020">
    <property type="term" value="C:membrane"/>
    <property type="evidence" value="ECO:0007669"/>
    <property type="project" value="UniProtKB-UniRule"/>
</dbReference>
<dbReference type="GO" id="GO:0052150">
    <property type="term" value="P:symbiont-mediated perturbation of host apoptosis"/>
    <property type="evidence" value="ECO:0007669"/>
    <property type="project" value="UniProtKB-KW"/>
</dbReference>
<dbReference type="GO" id="GO:0039545">
    <property type="term" value="P:symbiont-mediated suppression of host cytoplasmic pattern recognition receptor signaling pathway via inhibition of MAVS activity"/>
    <property type="evidence" value="ECO:0007669"/>
    <property type="project" value="UniProtKB-KW"/>
</dbReference>
<dbReference type="HAMAP" id="MF_04064">
    <property type="entry name" value="INFV_PB1F2"/>
    <property type="match status" value="1"/>
</dbReference>
<dbReference type="InterPro" id="IPR021045">
    <property type="entry name" value="Flu_proapoptotic_PB1-F2"/>
</dbReference>
<dbReference type="Pfam" id="PF11986">
    <property type="entry name" value="PB1-F2"/>
    <property type="match status" value="1"/>
</dbReference>
<protein>
    <recommendedName>
        <fullName evidence="1">Protein PB1-F2</fullName>
    </recommendedName>
</protein>
<gene>
    <name evidence="1" type="primary">PB1</name>
</gene>
<sequence length="90" mass="10961">MEREQDTPWTQSTEHINIQKRGNGQQTQKLEHPNLTQLMDHYLRIMSQVDMHKQTVSWKQWLSLKSPTQESLKTRVLKRWKLFNKQEWTS</sequence>
<keyword id="KW-0053">Apoptosis</keyword>
<keyword id="KW-1035">Host cytoplasm</keyword>
<keyword id="KW-1043">Host membrane</keyword>
<keyword id="KW-1045">Host mitochondrion</keyword>
<keyword id="KW-1046">Host mitochondrion inner membrane</keyword>
<keyword id="KW-1048">Host nucleus</keyword>
<keyword id="KW-0945">Host-virus interaction</keyword>
<keyword id="KW-1090">Inhibition of host innate immune response by virus</keyword>
<keyword id="KW-1097">Inhibition of host MAVS by virus</keyword>
<keyword id="KW-1113">Inhibition of host RLR pathway by virus</keyword>
<keyword id="KW-0472">Membrane</keyword>
<keyword id="KW-1119">Modulation of host cell apoptosis by virus</keyword>
<keyword id="KW-0899">Viral immunoevasion</keyword>
<comment type="function">
    <text evidence="1">Plays an important role in promoting lung pathology in both primary viral infection and secondary bacterial infection. Promotes alteration of mitochondrial morphology, dissipation of mitochondrial membrane potential, and cell death. Alternatively, inhibits the production of interferon in the infected cell at the level of host mitochondrial antiviral signaling MAVS. Its level of expression differs greatly depending on which cell type is infected, in a manner that is independent of the levels of expression of other viral proteins. Monocytic cells are more affected than epithelial cells. Seems to disable virus-infected monocytes or other host innate immune cells. During early stage of infection, predisposes the mitochondria to permeability transition through interaction with host SLC25A6/ANT3 and VDAC1. These proteins participate in the formation of the permeability transition pore complex (PTPC) responsible of the release of mitochondrial products that triggers apoptosis.</text>
</comment>
<comment type="subunit">
    <text evidence="1">Oligomer. Interacts with human SLC25A6/ANT3 and VDAC1. Interacts with host MAVS.</text>
</comment>
<comment type="subcellular location">
    <subcellularLocation>
        <location evidence="1">Host mitochondrion inner membrane</location>
    </subcellularLocation>
    <subcellularLocation>
        <location evidence="1">Host nucleus</location>
    </subcellularLocation>
    <subcellularLocation>
        <location evidence="1">Host cytoplasm</location>
        <location evidence="1">Host cytosol</location>
    </subcellularLocation>
    <text evidence="1">Inner mitochondrial membrane in most cells types. Otherwise is detected in the nucleus and cytosol.</text>
</comment>
<comment type="miscellaneous">
    <text>Is not encoded in all strains, and seems to be dispensable for replication.</text>
</comment>
<comment type="similarity">
    <text evidence="1">Belongs to the influenza viruses PB1-F2 family.</text>
</comment>
<organism>
    <name type="scientific">Influenza A virus (strain A/Turkey/Minnesota/833/1980 H4N2)</name>
    <dbReference type="NCBI Taxonomy" id="383603"/>
    <lineage>
        <taxon>Viruses</taxon>
        <taxon>Riboviria</taxon>
        <taxon>Orthornavirae</taxon>
        <taxon>Negarnaviricota</taxon>
        <taxon>Polyploviricotina</taxon>
        <taxon>Insthoviricetes</taxon>
        <taxon>Articulavirales</taxon>
        <taxon>Orthomyxoviridae</taxon>
        <taxon>Alphainfluenzavirus</taxon>
        <taxon>Alphainfluenzavirus influenzae</taxon>
        <taxon>Influenza A virus</taxon>
    </lineage>
</organism>
<evidence type="ECO:0000255" key="1">
    <source>
        <dbReference type="HAMAP-Rule" id="MF_04064"/>
    </source>
</evidence>
<evidence type="ECO:0000256" key="2">
    <source>
        <dbReference type="SAM" id="MobiDB-lite"/>
    </source>
</evidence>
<accession>Q20NN4</accession>
<organismHost>
    <name type="scientific">Aves</name>
    <dbReference type="NCBI Taxonomy" id="8782"/>
</organismHost>
<name>PB1F2_I80A8</name>